<keyword id="KW-1003">Cell membrane</keyword>
<keyword id="KW-0472">Membrane</keyword>
<keyword id="KW-0812">Transmembrane</keyword>
<keyword id="KW-1133">Transmembrane helix</keyword>
<evidence type="ECO:0000255" key="1">
    <source>
        <dbReference type="HAMAP-Rule" id="MF_01546"/>
    </source>
</evidence>
<dbReference type="EMBL" id="CP000946">
    <property type="protein sequence ID" value="ACA76141.1"/>
    <property type="molecule type" value="Genomic_DNA"/>
</dbReference>
<dbReference type="RefSeq" id="WP_000051841.1">
    <property type="nucleotide sequence ID" value="NZ_MTFT01000027.1"/>
</dbReference>
<dbReference type="GeneID" id="93778743"/>
<dbReference type="KEGG" id="ecl:EcolC_0464"/>
<dbReference type="HOGENOM" id="CLU_188292_0_0_6"/>
<dbReference type="GO" id="GO:0005886">
    <property type="term" value="C:plasma membrane"/>
    <property type="evidence" value="ECO:0007669"/>
    <property type="project" value="UniProtKB-SubCell"/>
</dbReference>
<dbReference type="HAMAP" id="MF_01546">
    <property type="entry name" value="AaeX"/>
    <property type="match status" value="1"/>
</dbReference>
<dbReference type="InterPro" id="IPR012451">
    <property type="entry name" value="DUF1656"/>
</dbReference>
<dbReference type="NCBIfam" id="NF008615">
    <property type="entry name" value="PRK11594.1"/>
    <property type="match status" value="1"/>
</dbReference>
<dbReference type="Pfam" id="PF07869">
    <property type="entry name" value="DUF1656"/>
    <property type="match status" value="1"/>
</dbReference>
<gene>
    <name evidence="1" type="primary">aaeX</name>
    <name type="ordered locus">EcolC_0464</name>
</gene>
<accession>B1IQN7</accession>
<protein>
    <recommendedName>
        <fullName evidence="1">Protein AaeX</fullName>
    </recommendedName>
</protein>
<proteinExistence type="inferred from homology"/>
<organism>
    <name type="scientific">Escherichia coli (strain ATCC 8739 / DSM 1576 / NBRC 3972 / NCIMB 8545 / WDCM 00012 / Crooks)</name>
    <dbReference type="NCBI Taxonomy" id="481805"/>
    <lineage>
        <taxon>Bacteria</taxon>
        <taxon>Pseudomonadati</taxon>
        <taxon>Pseudomonadota</taxon>
        <taxon>Gammaproteobacteria</taxon>
        <taxon>Enterobacterales</taxon>
        <taxon>Enterobacteriaceae</taxon>
        <taxon>Escherichia</taxon>
    </lineage>
</organism>
<feature type="chain" id="PRO_1000087667" description="Protein AaeX">
    <location>
        <begin position="1"/>
        <end position="67"/>
    </location>
</feature>
<feature type="transmembrane region" description="Helical" evidence="1">
    <location>
        <begin position="3"/>
        <end position="23"/>
    </location>
</feature>
<feature type="transmembrane region" description="Helical" evidence="1">
    <location>
        <begin position="43"/>
        <end position="63"/>
    </location>
</feature>
<sequence>MSLFPVIVVFGLSFPPIFFELLLSLAIFWLVRRVLVPTGIYDFVWHPALFNTALYCCLFYLISRLFV</sequence>
<comment type="subcellular location">
    <subcellularLocation>
        <location evidence="1">Cell membrane</location>
        <topology evidence="1">Multi-pass membrane protein</topology>
    </subcellularLocation>
</comment>
<comment type="induction">
    <text evidence="1">Positively coregulated with aaeA and aaeB by AaeR.</text>
</comment>
<comment type="similarity">
    <text evidence="1">Belongs to the AaeX family.</text>
</comment>
<reference key="1">
    <citation type="submission" date="2008-02" db="EMBL/GenBank/DDBJ databases">
        <title>Complete sequence of Escherichia coli C str. ATCC 8739.</title>
        <authorList>
            <person name="Copeland A."/>
            <person name="Lucas S."/>
            <person name="Lapidus A."/>
            <person name="Glavina del Rio T."/>
            <person name="Dalin E."/>
            <person name="Tice H."/>
            <person name="Bruce D."/>
            <person name="Goodwin L."/>
            <person name="Pitluck S."/>
            <person name="Kiss H."/>
            <person name="Brettin T."/>
            <person name="Detter J.C."/>
            <person name="Han C."/>
            <person name="Kuske C.R."/>
            <person name="Schmutz J."/>
            <person name="Larimer F."/>
            <person name="Land M."/>
            <person name="Hauser L."/>
            <person name="Kyrpides N."/>
            <person name="Mikhailova N."/>
            <person name="Ingram L."/>
            <person name="Richardson P."/>
        </authorList>
    </citation>
    <scope>NUCLEOTIDE SEQUENCE [LARGE SCALE GENOMIC DNA]</scope>
    <source>
        <strain>ATCC 8739 / DSM 1576 / NBRC 3972 / NCIMB 8545 / WDCM 00012 / Crooks</strain>
    </source>
</reference>
<name>AAEX_ECOLC</name>